<organism>
    <name type="scientific">Ruminiclostridium cellulolyticum (strain ATCC 35319 / DSM 5812 / JCM 6584 / H10)</name>
    <name type="common">Clostridium cellulolyticum</name>
    <dbReference type="NCBI Taxonomy" id="394503"/>
    <lineage>
        <taxon>Bacteria</taxon>
        <taxon>Bacillati</taxon>
        <taxon>Bacillota</taxon>
        <taxon>Clostridia</taxon>
        <taxon>Eubacteriales</taxon>
        <taxon>Oscillospiraceae</taxon>
        <taxon>Ruminiclostridium</taxon>
    </lineage>
</organism>
<evidence type="ECO:0000255" key="1">
    <source>
        <dbReference type="HAMAP-Rule" id="MF_01025"/>
    </source>
</evidence>
<accession>B8I1T7</accession>
<proteinExistence type="inferred from homology"/>
<comment type="function">
    <text evidence="1">Catalyzes the condensation of the acetyl group of acetyl-CoA with 3-methyl-2-oxobutanoate (2-ketoisovalerate) to form 3-carboxy-3-hydroxy-4-methylpentanoate (2-isopropylmalate).</text>
</comment>
<comment type="catalytic activity">
    <reaction evidence="1">
        <text>3-methyl-2-oxobutanoate + acetyl-CoA + H2O = (2S)-2-isopropylmalate + CoA + H(+)</text>
        <dbReference type="Rhea" id="RHEA:21524"/>
        <dbReference type="ChEBI" id="CHEBI:1178"/>
        <dbReference type="ChEBI" id="CHEBI:11851"/>
        <dbReference type="ChEBI" id="CHEBI:15377"/>
        <dbReference type="ChEBI" id="CHEBI:15378"/>
        <dbReference type="ChEBI" id="CHEBI:57287"/>
        <dbReference type="ChEBI" id="CHEBI:57288"/>
        <dbReference type="EC" id="2.3.3.13"/>
    </reaction>
</comment>
<comment type="cofactor">
    <cofactor evidence="1">
        <name>Mn(2+)</name>
        <dbReference type="ChEBI" id="CHEBI:29035"/>
    </cofactor>
</comment>
<comment type="pathway">
    <text evidence="1">Amino-acid biosynthesis; L-leucine biosynthesis; L-leucine from 3-methyl-2-oxobutanoate: step 1/4.</text>
</comment>
<comment type="subunit">
    <text evidence="1">Homodimer.</text>
</comment>
<comment type="subcellular location">
    <subcellularLocation>
        <location evidence="1">Cytoplasm</location>
    </subcellularLocation>
</comment>
<comment type="similarity">
    <text evidence="1">Belongs to the alpha-IPM synthase/homocitrate synthase family. LeuA type 1 subfamily.</text>
</comment>
<feature type="chain" id="PRO_1000149169" description="2-isopropylmalate synthase">
    <location>
        <begin position="1"/>
        <end position="508"/>
    </location>
</feature>
<feature type="domain" description="Pyruvate carboxyltransferase" evidence="1">
    <location>
        <begin position="5"/>
        <end position="267"/>
    </location>
</feature>
<feature type="region of interest" description="Regulatory domain" evidence="1">
    <location>
        <begin position="390"/>
        <end position="508"/>
    </location>
</feature>
<feature type="binding site" evidence="1">
    <location>
        <position position="14"/>
    </location>
    <ligand>
        <name>Mn(2+)</name>
        <dbReference type="ChEBI" id="CHEBI:29035"/>
    </ligand>
</feature>
<feature type="binding site" evidence="1">
    <location>
        <position position="202"/>
    </location>
    <ligand>
        <name>Mn(2+)</name>
        <dbReference type="ChEBI" id="CHEBI:29035"/>
    </ligand>
</feature>
<feature type="binding site" evidence="1">
    <location>
        <position position="204"/>
    </location>
    <ligand>
        <name>Mn(2+)</name>
        <dbReference type="ChEBI" id="CHEBI:29035"/>
    </ligand>
</feature>
<feature type="binding site" evidence="1">
    <location>
        <position position="238"/>
    </location>
    <ligand>
        <name>Mn(2+)</name>
        <dbReference type="ChEBI" id="CHEBI:29035"/>
    </ligand>
</feature>
<name>LEU1_RUMCH</name>
<keyword id="KW-0028">Amino-acid biosynthesis</keyword>
<keyword id="KW-0100">Branched-chain amino acid biosynthesis</keyword>
<keyword id="KW-0963">Cytoplasm</keyword>
<keyword id="KW-0432">Leucine biosynthesis</keyword>
<keyword id="KW-0464">Manganese</keyword>
<keyword id="KW-0479">Metal-binding</keyword>
<keyword id="KW-1185">Reference proteome</keyword>
<keyword id="KW-0808">Transferase</keyword>
<protein>
    <recommendedName>
        <fullName evidence="1">2-isopropylmalate synthase</fullName>
        <ecNumber evidence="1">2.3.3.13</ecNumber>
    </recommendedName>
    <alternativeName>
        <fullName evidence="1">Alpha-IPM synthase</fullName>
    </alternativeName>
    <alternativeName>
        <fullName evidence="1">Alpha-isopropylmalate synthase</fullName>
    </alternativeName>
</protein>
<dbReference type="EC" id="2.3.3.13" evidence="1"/>
<dbReference type="EMBL" id="CP001348">
    <property type="protein sequence ID" value="ACL77722.1"/>
    <property type="molecule type" value="Genomic_DNA"/>
</dbReference>
<dbReference type="RefSeq" id="WP_015926774.1">
    <property type="nucleotide sequence ID" value="NC_011898.1"/>
</dbReference>
<dbReference type="SMR" id="B8I1T7"/>
<dbReference type="STRING" id="394503.Ccel_3434"/>
<dbReference type="KEGG" id="cce:Ccel_3434"/>
<dbReference type="eggNOG" id="COG0119">
    <property type="taxonomic scope" value="Bacteria"/>
</dbReference>
<dbReference type="HOGENOM" id="CLU_022158_0_1_9"/>
<dbReference type="OrthoDB" id="9804858at2"/>
<dbReference type="UniPathway" id="UPA00048">
    <property type="reaction ID" value="UER00070"/>
</dbReference>
<dbReference type="Proteomes" id="UP000001349">
    <property type="component" value="Chromosome"/>
</dbReference>
<dbReference type="GO" id="GO:0005737">
    <property type="term" value="C:cytoplasm"/>
    <property type="evidence" value="ECO:0007669"/>
    <property type="project" value="UniProtKB-SubCell"/>
</dbReference>
<dbReference type="GO" id="GO:0003852">
    <property type="term" value="F:2-isopropylmalate synthase activity"/>
    <property type="evidence" value="ECO:0007669"/>
    <property type="project" value="UniProtKB-UniRule"/>
</dbReference>
<dbReference type="GO" id="GO:0003985">
    <property type="term" value="F:acetyl-CoA C-acetyltransferase activity"/>
    <property type="evidence" value="ECO:0007669"/>
    <property type="project" value="UniProtKB-UniRule"/>
</dbReference>
<dbReference type="GO" id="GO:0030145">
    <property type="term" value="F:manganese ion binding"/>
    <property type="evidence" value="ECO:0007669"/>
    <property type="project" value="UniProtKB-UniRule"/>
</dbReference>
<dbReference type="GO" id="GO:0009098">
    <property type="term" value="P:L-leucine biosynthetic process"/>
    <property type="evidence" value="ECO:0007669"/>
    <property type="project" value="UniProtKB-UniRule"/>
</dbReference>
<dbReference type="CDD" id="cd07940">
    <property type="entry name" value="DRE_TIM_IPMS"/>
    <property type="match status" value="1"/>
</dbReference>
<dbReference type="FunFam" id="1.10.238.260:FF:000001">
    <property type="entry name" value="2-isopropylmalate synthase"/>
    <property type="match status" value="1"/>
</dbReference>
<dbReference type="FunFam" id="3.20.20.70:FF:000010">
    <property type="entry name" value="2-isopropylmalate synthase"/>
    <property type="match status" value="1"/>
</dbReference>
<dbReference type="FunFam" id="3.30.160.270:FF:000001">
    <property type="entry name" value="2-isopropylmalate synthase"/>
    <property type="match status" value="1"/>
</dbReference>
<dbReference type="Gene3D" id="1.10.238.260">
    <property type="match status" value="1"/>
</dbReference>
<dbReference type="Gene3D" id="3.30.160.270">
    <property type="match status" value="1"/>
</dbReference>
<dbReference type="Gene3D" id="3.20.20.70">
    <property type="entry name" value="Aldolase class I"/>
    <property type="match status" value="1"/>
</dbReference>
<dbReference type="HAMAP" id="MF_01025">
    <property type="entry name" value="LeuA_type1"/>
    <property type="match status" value="1"/>
</dbReference>
<dbReference type="InterPro" id="IPR050073">
    <property type="entry name" value="2-IPM_HCS-like"/>
</dbReference>
<dbReference type="InterPro" id="IPR013709">
    <property type="entry name" value="2-isopropylmalate_synth_dimer"/>
</dbReference>
<dbReference type="InterPro" id="IPR002034">
    <property type="entry name" value="AIPM/Hcit_synth_CS"/>
</dbReference>
<dbReference type="InterPro" id="IPR013785">
    <property type="entry name" value="Aldolase_TIM"/>
</dbReference>
<dbReference type="InterPro" id="IPR054691">
    <property type="entry name" value="LeuA/HCS_post-cat"/>
</dbReference>
<dbReference type="InterPro" id="IPR036230">
    <property type="entry name" value="LeuA_allosteric_dom_sf"/>
</dbReference>
<dbReference type="InterPro" id="IPR005671">
    <property type="entry name" value="LeuA_bact_synth"/>
</dbReference>
<dbReference type="InterPro" id="IPR000891">
    <property type="entry name" value="PYR_CT"/>
</dbReference>
<dbReference type="NCBIfam" id="TIGR00973">
    <property type="entry name" value="leuA_bact"/>
    <property type="match status" value="1"/>
</dbReference>
<dbReference type="NCBIfam" id="NF002085">
    <property type="entry name" value="PRK00915.1-2"/>
    <property type="match status" value="1"/>
</dbReference>
<dbReference type="NCBIfam" id="NF002086">
    <property type="entry name" value="PRK00915.1-3"/>
    <property type="match status" value="1"/>
</dbReference>
<dbReference type="PANTHER" id="PTHR10277:SF9">
    <property type="entry name" value="2-ISOPROPYLMALATE SYNTHASE 1, CHLOROPLASTIC-RELATED"/>
    <property type="match status" value="1"/>
</dbReference>
<dbReference type="PANTHER" id="PTHR10277">
    <property type="entry name" value="HOMOCITRATE SYNTHASE-RELATED"/>
    <property type="match status" value="1"/>
</dbReference>
<dbReference type="Pfam" id="PF22617">
    <property type="entry name" value="HCS_D2"/>
    <property type="match status" value="1"/>
</dbReference>
<dbReference type="Pfam" id="PF00682">
    <property type="entry name" value="HMGL-like"/>
    <property type="match status" value="1"/>
</dbReference>
<dbReference type="Pfam" id="PF08502">
    <property type="entry name" value="LeuA_dimer"/>
    <property type="match status" value="1"/>
</dbReference>
<dbReference type="SMART" id="SM00917">
    <property type="entry name" value="LeuA_dimer"/>
    <property type="match status" value="1"/>
</dbReference>
<dbReference type="SUPFAM" id="SSF110921">
    <property type="entry name" value="2-isopropylmalate synthase LeuA, allosteric (dimerisation) domain"/>
    <property type="match status" value="1"/>
</dbReference>
<dbReference type="SUPFAM" id="SSF51569">
    <property type="entry name" value="Aldolase"/>
    <property type="match status" value="1"/>
</dbReference>
<dbReference type="PROSITE" id="PS00815">
    <property type="entry name" value="AIPM_HOMOCIT_SYNTH_1"/>
    <property type="match status" value="1"/>
</dbReference>
<dbReference type="PROSITE" id="PS00816">
    <property type="entry name" value="AIPM_HOMOCIT_SYNTH_2"/>
    <property type="match status" value="1"/>
</dbReference>
<dbReference type="PROSITE" id="PS50991">
    <property type="entry name" value="PYR_CT"/>
    <property type="match status" value="1"/>
</dbReference>
<sequence>MARTIKIFDTTLRDGEQTPGVNLNLQEKLEIAKQLVRLGVDVIEGGFAIASPGDFESIMTLSRNLKGVTIASLCRSVEKDIDRAWEAVQYAESPRIHTFIATSDIHMKYKLKMTEEEVLERAVSMVKRAKGYCSNVEFSAEDASRTREEFLYRVVEAVIKAGATTVNIPDTVGYSTPLEFGRLIRNIRNNVPNIDKADISVHCHNDLGLAVANSLAAVENGAVQVECTINGLGERAGNAALEEIIMGINTRKDYYDITHRIDTTQIYRASRLVSSLTGVNVQPNKAIVGANAFAHESGIHQHGVLSEKTTYEIMTPESVGMGTNRMVLGKLSGRHAFEDRLKEMGYSLSDEEVKTAFAKFKDLADKKKVVTDKDIEALVDENIAVPEIFVIDSFQINSGNKMISTSTVSVRKDEEIITEAATGDGPVDAAFNAVERATGVNAELVHYRIKAVTEGKDALGEVTVKISNNNSIFMGKGVSTDIIEASVKAYLNAINRSISEIGESIISQ</sequence>
<reference key="1">
    <citation type="submission" date="2009-01" db="EMBL/GenBank/DDBJ databases">
        <title>Complete sequence of Clostridium cellulolyticum H10.</title>
        <authorList>
            <consortium name="US DOE Joint Genome Institute"/>
            <person name="Lucas S."/>
            <person name="Copeland A."/>
            <person name="Lapidus A."/>
            <person name="Glavina del Rio T."/>
            <person name="Dalin E."/>
            <person name="Tice H."/>
            <person name="Bruce D."/>
            <person name="Goodwin L."/>
            <person name="Pitluck S."/>
            <person name="Chertkov O."/>
            <person name="Saunders E."/>
            <person name="Brettin T."/>
            <person name="Detter J.C."/>
            <person name="Han C."/>
            <person name="Larimer F."/>
            <person name="Land M."/>
            <person name="Hauser L."/>
            <person name="Kyrpides N."/>
            <person name="Ivanova N."/>
            <person name="Zhou J."/>
            <person name="Richardson P."/>
        </authorList>
    </citation>
    <scope>NUCLEOTIDE SEQUENCE [LARGE SCALE GENOMIC DNA]</scope>
    <source>
        <strain>ATCC 35319 / DSM 5812 / JCM 6584 / H10</strain>
    </source>
</reference>
<gene>
    <name evidence="1" type="primary">leuA</name>
    <name type="ordered locus">Ccel_3434</name>
</gene>